<reference key="1">
    <citation type="journal article" date="2009" name="PLoS Pathog.">
        <title>Genomic evidence for the evolution of Streptococcus equi: host restriction, increased virulence, and genetic exchange with human pathogens.</title>
        <authorList>
            <person name="Holden M.T.G."/>
            <person name="Heather Z."/>
            <person name="Paillot R."/>
            <person name="Steward K.F."/>
            <person name="Webb K."/>
            <person name="Ainslie F."/>
            <person name="Jourdan T."/>
            <person name="Bason N.C."/>
            <person name="Holroyd N.E."/>
            <person name="Mungall K."/>
            <person name="Quail M.A."/>
            <person name="Sanders M."/>
            <person name="Simmonds M."/>
            <person name="Willey D."/>
            <person name="Brooks K."/>
            <person name="Aanensen D.M."/>
            <person name="Spratt B.G."/>
            <person name="Jolley K.A."/>
            <person name="Maiden M.C.J."/>
            <person name="Kehoe M."/>
            <person name="Chanter N."/>
            <person name="Bentley S.D."/>
            <person name="Robinson C."/>
            <person name="Maskell D.J."/>
            <person name="Parkhill J."/>
            <person name="Waller A.S."/>
        </authorList>
    </citation>
    <scope>NUCLEOTIDE SEQUENCE [LARGE SCALE GENOMIC DNA]</scope>
    <source>
        <strain>4047</strain>
    </source>
</reference>
<name>XPT_STRE4</name>
<organism>
    <name type="scientific">Streptococcus equi subsp. equi (strain 4047)</name>
    <dbReference type="NCBI Taxonomy" id="553482"/>
    <lineage>
        <taxon>Bacteria</taxon>
        <taxon>Bacillati</taxon>
        <taxon>Bacillota</taxon>
        <taxon>Bacilli</taxon>
        <taxon>Lactobacillales</taxon>
        <taxon>Streptococcaceae</taxon>
        <taxon>Streptococcus</taxon>
    </lineage>
</organism>
<comment type="function">
    <text evidence="1">Converts the preformed base xanthine, a product of nucleic acid breakdown, to xanthosine 5'-monophosphate (XMP), so it can be reused for RNA or DNA synthesis.</text>
</comment>
<comment type="catalytic activity">
    <reaction evidence="1">
        <text>XMP + diphosphate = xanthine + 5-phospho-alpha-D-ribose 1-diphosphate</text>
        <dbReference type="Rhea" id="RHEA:10800"/>
        <dbReference type="ChEBI" id="CHEBI:17712"/>
        <dbReference type="ChEBI" id="CHEBI:33019"/>
        <dbReference type="ChEBI" id="CHEBI:57464"/>
        <dbReference type="ChEBI" id="CHEBI:58017"/>
        <dbReference type="EC" id="2.4.2.22"/>
    </reaction>
</comment>
<comment type="pathway">
    <text evidence="1">Purine metabolism; XMP biosynthesis via salvage pathway; XMP from xanthine: step 1/1.</text>
</comment>
<comment type="subunit">
    <text evidence="1">Homodimer.</text>
</comment>
<comment type="subcellular location">
    <subcellularLocation>
        <location evidence="1">Cytoplasm</location>
    </subcellularLocation>
</comment>
<comment type="similarity">
    <text evidence="1">Belongs to the purine/pyrimidine phosphoribosyltransferase family. Xpt subfamily.</text>
</comment>
<keyword id="KW-0963">Cytoplasm</keyword>
<keyword id="KW-0328">Glycosyltransferase</keyword>
<keyword id="KW-0660">Purine salvage</keyword>
<keyword id="KW-0808">Transferase</keyword>
<protein>
    <recommendedName>
        <fullName evidence="1">Xanthine phosphoribosyltransferase</fullName>
        <shortName evidence="1">XPRTase</shortName>
        <ecNumber evidence="1">2.4.2.22</ecNumber>
    </recommendedName>
</protein>
<accession>C0MBC1</accession>
<proteinExistence type="inferred from homology"/>
<gene>
    <name evidence="1" type="primary">xpt</name>
    <name type="ordered locus">SEQ_1154</name>
</gene>
<evidence type="ECO:0000255" key="1">
    <source>
        <dbReference type="HAMAP-Rule" id="MF_01184"/>
    </source>
</evidence>
<dbReference type="EC" id="2.4.2.22" evidence="1"/>
<dbReference type="EMBL" id="FM204883">
    <property type="protein sequence ID" value="CAW93841.1"/>
    <property type="molecule type" value="Genomic_DNA"/>
</dbReference>
<dbReference type="RefSeq" id="WP_012679551.1">
    <property type="nucleotide sequence ID" value="NC_012471.1"/>
</dbReference>
<dbReference type="SMR" id="C0MBC1"/>
<dbReference type="KEGG" id="seu:SEQ_1154"/>
<dbReference type="HOGENOM" id="CLU_099015_0_0_9"/>
<dbReference type="OrthoDB" id="9790678at2"/>
<dbReference type="UniPathway" id="UPA00602">
    <property type="reaction ID" value="UER00658"/>
</dbReference>
<dbReference type="Proteomes" id="UP000001365">
    <property type="component" value="Chromosome"/>
</dbReference>
<dbReference type="GO" id="GO:0005737">
    <property type="term" value="C:cytoplasm"/>
    <property type="evidence" value="ECO:0007669"/>
    <property type="project" value="UniProtKB-SubCell"/>
</dbReference>
<dbReference type="GO" id="GO:0000310">
    <property type="term" value="F:xanthine phosphoribosyltransferase activity"/>
    <property type="evidence" value="ECO:0007669"/>
    <property type="project" value="UniProtKB-UniRule"/>
</dbReference>
<dbReference type="GO" id="GO:0006166">
    <property type="term" value="P:purine ribonucleoside salvage"/>
    <property type="evidence" value="ECO:0007669"/>
    <property type="project" value="UniProtKB-KW"/>
</dbReference>
<dbReference type="GO" id="GO:0046110">
    <property type="term" value="P:xanthine metabolic process"/>
    <property type="evidence" value="ECO:0007669"/>
    <property type="project" value="InterPro"/>
</dbReference>
<dbReference type="GO" id="GO:0032265">
    <property type="term" value="P:XMP salvage"/>
    <property type="evidence" value="ECO:0007669"/>
    <property type="project" value="UniProtKB-UniRule"/>
</dbReference>
<dbReference type="CDD" id="cd06223">
    <property type="entry name" value="PRTases_typeI"/>
    <property type="match status" value="1"/>
</dbReference>
<dbReference type="Gene3D" id="3.40.50.2020">
    <property type="match status" value="1"/>
</dbReference>
<dbReference type="HAMAP" id="MF_01184">
    <property type="entry name" value="XPRTase"/>
    <property type="match status" value="1"/>
</dbReference>
<dbReference type="InterPro" id="IPR000836">
    <property type="entry name" value="PRibTrfase_dom"/>
</dbReference>
<dbReference type="InterPro" id="IPR029057">
    <property type="entry name" value="PRTase-like"/>
</dbReference>
<dbReference type="InterPro" id="IPR050118">
    <property type="entry name" value="Pur/Pyrimidine_PRTase"/>
</dbReference>
<dbReference type="InterPro" id="IPR010079">
    <property type="entry name" value="Xanthine_PRibTrfase"/>
</dbReference>
<dbReference type="NCBIfam" id="NF006671">
    <property type="entry name" value="PRK09219.1"/>
    <property type="match status" value="1"/>
</dbReference>
<dbReference type="NCBIfam" id="TIGR01744">
    <property type="entry name" value="XPRTase"/>
    <property type="match status" value="1"/>
</dbReference>
<dbReference type="PANTHER" id="PTHR43864">
    <property type="entry name" value="HYPOXANTHINE/GUANINE PHOSPHORIBOSYLTRANSFERASE"/>
    <property type="match status" value="1"/>
</dbReference>
<dbReference type="PANTHER" id="PTHR43864:SF1">
    <property type="entry name" value="XANTHINE PHOSPHORIBOSYLTRANSFERASE"/>
    <property type="match status" value="1"/>
</dbReference>
<dbReference type="Pfam" id="PF00156">
    <property type="entry name" value="Pribosyltran"/>
    <property type="match status" value="1"/>
</dbReference>
<dbReference type="SUPFAM" id="SSF53271">
    <property type="entry name" value="PRTase-like"/>
    <property type="match status" value="1"/>
</dbReference>
<feature type="chain" id="PRO_1000164454" description="Xanthine phosphoribosyltransferase">
    <location>
        <begin position="1"/>
        <end position="193"/>
    </location>
</feature>
<feature type="binding site" evidence="1">
    <location>
        <position position="20"/>
    </location>
    <ligand>
        <name>xanthine</name>
        <dbReference type="ChEBI" id="CHEBI:17712"/>
    </ligand>
</feature>
<feature type="binding site" evidence="1">
    <location>
        <position position="27"/>
    </location>
    <ligand>
        <name>xanthine</name>
        <dbReference type="ChEBI" id="CHEBI:17712"/>
    </ligand>
</feature>
<feature type="binding site" evidence="1">
    <location>
        <begin position="128"/>
        <end position="132"/>
    </location>
    <ligand>
        <name>5-phospho-alpha-D-ribose 1-diphosphate</name>
        <dbReference type="ChEBI" id="CHEBI:58017"/>
    </ligand>
</feature>
<feature type="binding site" evidence="1">
    <location>
        <position position="156"/>
    </location>
    <ligand>
        <name>xanthine</name>
        <dbReference type="ChEBI" id="CHEBI:17712"/>
    </ligand>
</feature>
<sequence length="193" mass="20931">MRLLEERILADGTVLGETILKVDQFLTHQVDYRLMKEIGRVFADQYADLGITKVVTIEASGIAPAVYTAEALEVPMIFAKKHKNITMTEGILTAEVYSFTKQVTSTVSIAGGLLSKEDRVLIIDDFLANGQAAKGLIDIIHQAGAKAVGIGIVIEKSFQAGRQLLEDLGVEVTSLARIKHFDNGIVSFLEADA</sequence>